<organism>
    <name type="scientific">Nitrosomonas eutropha (strain DSM 101675 / C91 / Nm57)</name>
    <dbReference type="NCBI Taxonomy" id="335283"/>
    <lineage>
        <taxon>Bacteria</taxon>
        <taxon>Pseudomonadati</taxon>
        <taxon>Pseudomonadota</taxon>
        <taxon>Betaproteobacteria</taxon>
        <taxon>Nitrosomonadales</taxon>
        <taxon>Nitrosomonadaceae</taxon>
        <taxon>Nitrosomonas</taxon>
    </lineage>
</organism>
<evidence type="ECO:0000255" key="1">
    <source>
        <dbReference type="HAMAP-Rule" id="MF_01595"/>
    </source>
</evidence>
<dbReference type="EC" id="2.7.7.8" evidence="1"/>
<dbReference type="EMBL" id="CP000450">
    <property type="protein sequence ID" value="ABI60379.1"/>
    <property type="molecule type" value="Genomic_DNA"/>
</dbReference>
<dbReference type="RefSeq" id="WP_011635176.1">
    <property type="nucleotide sequence ID" value="NC_008344.1"/>
</dbReference>
<dbReference type="SMR" id="Q0AE53"/>
<dbReference type="STRING" id="335283.Neut_2157"/>
<dbReference type="KEGG" id="net:Neut_2157"/>
<dbReference type="eggNOG" id="COG1185">
    <property type="taxonomic scope" value="Bacteria"/>
</dbReference>
<dbReference type="HOGENOM" id="CLU_004217_2_2_4"/>
<dbReference type="OrthoDB" id="9804305at2"/>
<dbReference type="Proteomes" id="UP000001966">
    <property type="component" value="Chromosome"/>
</dbReference>
<dbReference type="GO" id="GO:0005829">
    <property type="term" value="C:cytosol"/>
    <property type="evidence" value="ECO:0007669"/>
    <property type="project" value="TreeGrafter"/>
</dbReference>
<dbReference type="GO" id="GO:0000175">
    <property type="term" value="F:3'-5'-RNA exonuclease activity"/>
    <property type="evidence" value="ECO:0007669"/>
    <property type="project" value="TreeGrafter"/>
</dbReference>
<dbReference type="GO" id="GO:0000287">
    <property type="term" value="F:magnesium ion binding"/>
    <property type="evidence" value="ECO:0007669"/>
    <property type="project" value="UniProtKB-UniRule"/>
</dbReference>
<dbReference type="GO" id="GO:0004654">
    <property type="term" value="F:polyribonucleotide nucleotidyltransferase activity"/>
    <property type="evidence" value="ECO:0007669"/>
    <property type="project" value="UniProtKB-UniRule"/>
</dbReference>
<dbReference type="GO" id="GO:0003723">
    <property type="term" value="F:RNA binding"/>
    <property type="evidence" value="ECO:0007669"/>
    <property type="project" value="UniProtKB-UniRule"/>
</dbReference>
<dbReference type="GO" id="GO:0006402">
    <property type="term" value="P:mRNA catabolic process"/>
    <property type="evidence" value="ECO:0007669"/>
    <property type="project" value="UniProtKB-UniRule"/>
</dbReference>
<dbReference type="GO" id="GO:0006396">
    <property type="term" value="P:RNA processing"/>
    <property type="evidence" value="ECO:0007669"/>
    <property type="project" value="InterPro"/>
</dbReference>
<dbReference type="CDD" id="cd02393">
    <property type="entry name" value="KH-I_PNPase"/>
    <property type="match status" value="1"/>
</dbReference>
<dbReference type="CDD" id="cd11363">
    <property type="entry name" value="RNase_PH_PNPase_1"/>
    <property type="match status" value="1"/>
</dbReference>
<dbReference type="CDD" id="cd11364">
    <property type="entry name" value="RNase_PH_PNPase_2"/>
    <property type="match status" value="1"/>
</dbReference>
<dbReference type="CDD" id="cd04472">
    <property type="entry name" value="S1_PNPase"/>
    <property type="match status" value="1"/>
</dbReference>
<dbReference type="FunFam" id="2.40.50.140:FF:000023">
    <property type="entry name" value="Polyribonucleotide nucleotidyltransferase"/>
    <property type="match status" value="1"/>
</dbReference>
<dbReference type="FunFam" id="3.30.1370.10:FF:000001">
    <property type="entry name" value="Polyribonucleotide nucleotidyltransferase"/>
    <property type="match status" value="1"/>
</dbReference>
<dbReference type="FunFam" id="3.30.230.70:FF:000001">
    <property type="entry name" value="Polyribonucleotide nucleotidyltransferase"/>
    <property type="match status" value="1"/>
</dbReference>
<dbReference type="FunFam" id="3.30.230.70:FF:000002">
    <property type="entry name" value="Polyribonucleotide nucleotidyltransferase"/>
    <property type="match status" value="1"/>
</dbReference>
<dbReference type="Gene3D" id="3.30.230.70">
    <property type="entry name" value="GHMP Kinase, N-terminal domain"/>
    <property type="match status" value="2"/>
</dbReference>
<dbReference type="Gene3D" id="3.30.1370.10">
    <property type="entry name" value="K Homology domain, type 1"/>
    <property type="match status" value="1"/>
</dbReference>
<dbReference type="Gene3D" id="2.40.50.140">
    <property type="entry name" value="Nucleic acid-binding proteins"/>
    <property type="match status" value="1"/>
</dbReference>
<dbReference type="HAMAP" id="MF_01595">
    <property type="entry name" value="PNPase"/>
    <property type="match status" value="1"/>
</dbReference>
<dbReference type="InterPro" id="IPR001247">
    <property type="entry name" value="ExoRNase_PH_dom1"/>
</dbReference>
<dbReference type="InterPro" id="IPR015847">
    <property type="entry name" value="ExoRNase_PH_dom2"/>
</dbReference>
<dbReference type="InterPro" id="IPR036345">
    <property type="entry name" value="ExoRNase_PH_dom2_sf"/>
</dbReference>
<dbReference type="InterPro" id="IPR004087">
    <property type="entry name" value="KH_dom"/>
</dbReference>
<dbReference type="InterPro" id="IPR004088">
    <property type="entry name" value="KH_dom_type_1"/>
</dbReference>
<dbReference type="InterPro" id="IPR036612">
    <property type="entry name" value="KH_dom_type_1_sf"/>
</dbReference>
<dbReference type="InterPro" id="IPR012340">
    <property type="entry name" value="NA-bd_OB-fold"/>
</dbReference>
<dbReference type="InterPro" id="IPR012162">
    <property type="entry name" value="PNPase"/>
</dbReference>
<dbReference type="InterPro" id="IPR027408">
    <property type="entry name" value="PNPase/RNase_PH_dom_sf"/>
</dbReference>
<dbReference type="InterPro" id="IPR015848">
    <property type="entry name" value="PNPase_PH_RNA-bd_bac/org-type"/>
</dbReference>
<dbReference type="InterPro" id="IPR020568">
    <property type="entry name" value="Ribosomal_Su5_D2-typ_SF"/>
</dbReference>
<dbReference type="InterPro" id="IPR003029">
    <property type="entry name" value="S1_domain"/>
</dbReference>
<dbReference type="NCBIfam" id="TIGR03591">
    <property type="entry name" value="polynuc_phos"/>
    <property type="match status" value="1"/>
</dbReference>
<dbReference type="NCBIfam" id="NF008805">
    <property type="entry name" value="PRK11824.1"/>
    <property type="match status" value="1"/>
</dbReference>
<dbReference type="PANTHER" id="PTHR11252">
    <property type="entry name" value="POLYRIBONUCLEOTIDE NUCLEOTIDYLTRANSFERASE"/>
    <property type="match status" value="1"/>
</dbReference>
<dbReference type="PANTHER" id="PTHR11252:SF0">
    <property type="entry name" value="POLYRIBONUCLEOTIDE NUCLEOTIDYLTRANSFERASE 1, MITOCHONDRIAL"/>
    <property type="match status" value="1"/>
</dbReference>
<dbReference type="Pfam" id="PF00013">
    <property type="entry name" value="KH_1"/>
    <property type="match status" value="1"/>
</dbReference>
<dbReference type="Pfam" id="PF03726">
    <property type="entry name" value="PNPase"/>
    <property type="match status" value="1"/>
</dbReference>
<dbReference type="Pfam" id="PF01138">
    <property type="entry name" value="RNase_PH"/>
    <property type="match status" value="2"/>
</dbReference>
<dbReference type="Pfam" id="PF03725">
    <property type="entry name" value="RNase_PH_C"/>
    <property type="match status" value="2"/>
</dbReference>
<dbReference type="Pfam" id="PF00575">
    <property type="entry name" value="S1"/>
    <property type="match status" value="1"/>
</dbReference>
<dbReference type="PIRSF" id="PIRSF005499">
    <property type="entry name" value="PNPase"/>
    <property type="match status" value="1"/>
</dbReference>
<dbReference type="SMART" id="SM00322">
    <property type="entry name" value="KH"/>
    <property type="match status" value="1"/>
</dbReference>
<dbReference type="SMART" id="SM00316">
    <property type="entry name" value="S1"/>
    <property type="match status" value="1"/>
</dbReference>
<dbReference type="SUPFAM" id="SSF54791">
    <property type="entry name" value="Eukaryotic type KH-domain (KH-domain type I)"/>
    <property type="match status" value="1"/>
</dbReference>
<dbReference type="SUPFAM" id="SSF50249">
    <property type="entry name" value="Nucleic acid-binding proteins"/>
    <property type="match status" value="1"/>
</dbReference>
<dbReference type="SUPFAM" id="SSF55666">
    <property type="entry name" value="Ribonuclease PH domain 2-like"/>
    <property type="match status" value="2"/>
</dbReference>
<dbReference type="SUPFAM" id="SSF54211">
    <property type="entry name" value="Ribosomal protein S5 domain 2-like"/>
    <property type="match status" value="2"/>
</dbReference>
<dbReference type="PROSITE" id="PS50084">
    <property type="entry name" value="KH_TYPE_1"/>
    <property type="match status" value="1"/>
</dbReference>
<dbReference type="PROSITE" id="PS50126">
    <property type="entry name" value="S1"/>
    <property type="match status" value="1"/>
</dbReference>
<reference key="1">
    <citation type="journal article" date="2007" name="Environ. Microbiol.">
        <title>Whole-genome analysis of the ammonia-oxidizing bacterium, Nitrosomonas eutropha C91: implications for niche adaptation.</title>
        <authorList>
            <person name="Stein L.Y."/>
            <person name="Arp D.J."/>
            <person name="Berube P.M."/>
            <person name="Chain P.S."/>
            <person name="Hauser L."/>
            <person name="Jetten M.S."/>
            <person name="Klotz M.G."/>
            <person name="Larimer F.W."/>
            <person name="Norton J.M."/>
            <person name="Op den Camp H.J.M."/>
            <person name="Shin M."/>
            <person name="Wei X."/>
        </authorList>
    </citation>
    <scope>NUCLEOTIDE SEQUENCE [LARGE SCALE GENOMIC DNA]</scope>
    <source>
        <strain>DSM 101675 / C91 / Nm57</strain>
    </source>
</reference>
<protein>
    <recommendedName>
        <fullName evidence="1">Polyribonucleotide nucleotidyltransferase</fullName>
        <ecNumber evidence="1">2.7.7.8</ecNumber>
    </recommendedName>
    <alternativeName>
        <fullName evidence="1">Polynucleotide phosphorylase</fullName>
        <shortName evidence="1">PNPase</shortName>
    </alternativeName>
</protein>
<proteinExistence type="inferred from homology"/>
<sequence>MKPIKKSITYGHHTLTIETGEIAKQAHGAVMVSMDDTVVLVTVVGDKKTKPGQDFFPLTVDYQEKFYSAGRIPGSFFKREGRPSEKEILTSRLIDRPIRPLFPDGFYNEVQVIAMVLSSDAEIDADIPATIGASAALILSGIPFDGPIGAARVGYIDNEYVLNPTTTQLNKSQLNLVVAGTQKAVLMVESEANELSEDVMLGAVTYGHDQMQQVINMINELADETGVTAWDWQPAEKDHSLIEKITQLAEADLRDAFRLKQKSVRTEAISEIWQRVFTELKAGTEEGPSEQTIKEIGFALEAKIVRNSILDGESRIDGRGTRTVRPITIRHGVLPRTHGSALFTRGETQALVVTTLGTARDEQKIDALQGDYSERFMLHYNMPPFATGETGRVGSPKRREIGHGRLAKRALLAVLPPVEEFGYAMRVVSEVTESNGSSSMASVCGGCLALMDAGAPLKAHVAGIAMGLIKEGNRFAVLTDILGDEDHLGDMDFKVAGTEEGITALQMDIKIQGITKEIMQVALLQAKEGRLHILDIMKQSLPIARDSVSVHAPRIIKFKINPEKIRDVIGKGGAVIRALTEETGTTIDISDDGSVTIASISNEGGEQAKRRIENITADVEVGKIYEGTVLKLLDFGAIVSILPGKDGLLHISQIANERVESVADHLKEGQIIRVKVLEADDKGRLRLSMKAASTEAAATPENGEK</sequence>
<name>PNP_NITEC</name>
<feature type="chain" id="PRO_0000329738" description="Polyribonucleotide nucleotidyltransferase">
    <location>
        <begin position="1"/>
        <end position="705"/>
    </location>
</feature>
<feature type="domain" description="KH" evidence="1">
    <location>
        <begin position="553"/>
        <end position="612"/>
    </location>
</feature>
<feature type="domain" description="S1 motif" evidence="1">
    <location>
        <begin position="622"/>
        <end position="690"/>
    </location>
</feature>
<feature type="binding site" evidence="1">
    <location>
        <position position="486"/>
    </location>
    <ligand>
        <name>Mg(2+)</name>
        <dbReference type="ChEBI" id="CHEBI:18420"/>
    </ligand>
</feature>
<feature type="binding site" evidence="1">
    <location>
        <position position="492"/>
    </location>
    <ligand>
        <name>Mg(2+)</name>
        <dbReference type="ChEBI" id="CHEBI:18420"/>
    </ligand>
</feature>
<keyword id="KW-0963">Cytoplasm</keyword>
<keyword id="KW-0460">Magnesium</keyword>
<keyword id="KW-0479">Metal-binding</keyword>
<keyword id="KW-0548">Nucleotidyltransferase</keyword>
<keyword id="KW-0694">RNA-binding</keyword>
<keyword id="KW-0808">Transferase</keyword>
<gene>
    <name evidence="1" type="primary">pnp</name>
    <name type="ordered locus">Neut_2157</name>
</gene>
<accession>Q0AE53</accession>
<comment type="function">
    <text evidence="1">Involved in mRNA degradation. Catalyzes the phosphorolysis of single-stranded polyribonucleotides processively in the 3'- to 5'-direction.</text>
</comment>
<comment type="catalytic activity">
    <reaction evidence="1">
        <text>RNA(n+1) + phosphate = RNA(n) + a ribonucleoside 5'-diphosphate</text>
        <dbReference type="Rhea" id="RHEA:22096"/>
        <dbReference type="Rhea" id="RHEA-COMP:14527"/>
        <dbReference type="Rhea" id="RHEA-COMP:17342"/>
        <dbReference type="ChEBI" id="CHEBI:43474"/>
        <dbReference type="ChEBI" id="CHEBI:57930"/>
        <dbReference type="ChEBI" id="CHEBI:140395"/>
        <dbReference type="EC" id="2.7.7.8"/>
    </reaction>
</comment>
<comment type="cofactor">
    <cofactor evidence="1">
        <name>Mg(2+)</name>
        <dbReference type="ChEBI" id="CHEBI:18420"/>
    </cofactor>
</comment>
<comment type="subcellular location">
    <subcellularLocation>
        <location evidence="1">Cytoplasm</location>
    </subcellularLocation>
</comment>
<comment type="similarity">
    <text evidence="1">Belongs to the polyribonucleotide nucleotidyltransferase family.</text>
</comment>